<sequence>MTVLIQGAGIAGLALAREFTKAGIDWLLVERASEIRPIGTGITLASNALTALSSTLDLDRLFRRGMPLAGINVYAHDGSMLMSMPSSLGGNSRGGLALQRHELHAALLEGLDESRIRVGVSIVQILDGLDHERVTLSDGTVHDCSLVVGADGIRSSVRRYVWPEATLRHSGETCWRLVVPHRLEDAELAGEVWGHGKRLGFIQISPREMYVYATLKVRREEPEDEEGFVTPQRLAAHYADFDGIGASIARLIPSATTLVHNDLEELAGASWCRGRVVLIGDAAHAMTPNLGQGAAMALEDAFLLARLWCLAPRAETLILFQQQREARIEFIRKQSWIVGRLGQWESPWSVWLRNTLVRLVPNASRRRLHQRLFTGVGEMAAQ</sequence>
<protein>
    <recommendedName>
        <fullName>2-heptyl-3-hydroxy-4(1H)-quinolone synthase</fullName>
        <ecNumber>1.14.13.182</ecNumber>
    </recommendedName>
    <alternativeName>
        <fullName>2-heptyl-3,4-dihydroxyquinoline synthase</fullName>
    </alternativeName>
</protein>
<proteinExistence type="inferred from homology"/>
<comment type="function">
    <text evidence="1">Involved in the terminal step of the biosynthesis of quinolone which in addition to serve as a potent signal for quorum sensing, chelates iron and promotes the formation of membrane vesicles (MVs). Catalyzes the hydroxylation of 2-heptyl-4-quinolone (C7-HHQ) to yield 2-heptyl-3-hydroxy-4-quinolone (PQS).</text>
</comment>
<comment type="catalytic activity">
    <reaction>
        <text>2-heptyl-4(1H)-quinolone + NADH + O2 + H(+) = 2-heptyl-3-hydroxy-4(1H)-quinolone + NAD(+) + H2O</text>
        <dbReference type="Rhea" id="RHEA:37871"/>
        <dbReference type="ChEBI" id="CHEBI:15377"/>
        <dbReference type="ChEBI" id="CHEBI:15378"/>
        <dbReference type="ChEBI" id="CHEBI:15379"/>
        <dbReference type="ChEBI" id="CHEBI:29472"/>
        <dbReference type="ChEBI" id="CHEBI:57540"/>
        <dbReference type="ChEBI" id="CHEBI:57945"/>
        <dbReference type="ChEBI" id="CHEBI:62219"/>
        <dbReference type="EC" id="1.14.13.182"/>
    </reaction>
</comment>
<comment type="similarity">
    <text evidence="2">Belongs to the 3-hydroxybenzoate 6-hydroxylase family.</text>
</comment>
<gene>
    <name type="primary">pqsH</name>
    <name type="ordered locus">PA2587</name>
</gene>
<accession>Q9I0Q0</accession>
<name>PQSH_PSEAE</name>
<feature type="chain" id="PRO_0000429450" description="2-heptyl-3-hydroxy-4(1H)-quinolone synthase">
    <location>
        <begin position="1"/>
        <end position="382"/>
    </location>
</feature>
<organism>
    <name type="scientific">Pseudomonas aeruginosa (strain ATCC 15692 / DSM 22644 / CIP 104116 / JCM 14847 / LMG 12228 / 1C / PRS 101 / PAO1)</name>
    <dbReference type="NCBI Taxonomy" id="208964"/>
    <lineage>
        <taxon>Bacteria</taxon>
        <taxon>Pseudomonadati</taxon>
        <taxon>Pseudomonadota</taxon>
        <taxon>Gammaproteobacteria</taxon>
        <taxon>Pseudomonadales</taxon>
        <taxon>Pseudomonadaceae</taxon>
        <taxon>Pseudomonas</taxon>
    </lineage>
</organism>
<dbReference type="EC" id="1.14.13.182"/>
<dbReference type="EMBL" id="AE004091">
    <property type="protein sequence ID" value="AAG05975.1"/>
    <property type="molecule type" value="Genomic_DNA"/>
</dbReference>
<dbReference type="PIR" id="E83322">
    <property type="entry name" value="E83322"/>
</dbReference>
<dbReference type="RefSeq" id="NP_251277.1">
    <property type="nucleotide sequence ID" value="NC_002516.2"/>
</dbReference>
<dbReference type="RefSeq" id="WP_003090354.1">
    <property type="nucleotide sequence ID" value="NZ_QZGE01000008.1"/>
</dbReference>
<dbReference type="SMR" id="Q9I0Q0"/>
<dbReference type="FunCoup" id="Q9I0Q0">
    <property type="interactions" value="450"/>
</dbReference>
<dbReference type="STRING" id="208964.PA2587"/>
<dbReference type="PaxDb" id="208964-PA2587"/>
<dbReference type="DNASU" id="879540"/>
<dbReference type="GeneID" id="879540"/>
<dbReference type="KEGG" id="pae:PA2587"/>
<dbReference type="PATRIC" id="fig|208964.12.peg.2708"/>
<dbReference type="PseudoCAP" id="PA2587"/>
<dbReference type="HOGENOM" id="CLU_009665_19_5_6"/>
<dbReference type="InParanoid" id="Q9I0Q0"/>
<dbReference type="OrthoDB" id="9782160at2"/>
<dbReference type="PhylomeDB" id="Q9I0Q0"/>
<dbReference type="BioCyc" id="MetaCyc:MONOMER-16010"/>
<dbReference type="BioCyc" id="PAER208964:G1FZ6-2626-MONOMER"/>
<dbReference type="BRENDA" id="1.14.13.182">
    <property type="organism ID" value="5087"/>
</dbReference>
<dbReference type="Proteomes" id="UP000002438">
    <property type="component" value="Chromosome"/>
</dbReference>
<dbReference type="GO" id="GO:0102164">
    <property type="term" value="F:2-heptyl-3-hydroxy-4(1H)-quinolone synthase activity"/>
    <property type="evidence" value="ECO:0007669"/>
    <property type="project" value="UniProtKB-EC"/>
</dbReference>
<dbReference type="GO" id="GO:0071949">
    <property type="term" value="F:FAD binding"/>
    <property type="evidence" value="ECO:0007669"/>
    <property type="project" value="InterPro"/>
</dbReference>
<dbReference type="GO" id="GO:0004497">
    <property type="term" value="F:monooxygenase activity"/>
    <property type="evidence" value="ECO:0000314"/>
    <property type="project" value="PseudoCAP"/>
</dbReference>
<dbReference type="GO" id="GO:0009372">
    <property type="term" value="P:quorum sensing"/>
    <property type="evidence" value="ECO:0007669"/>
    <property type="project" value="UniProtKB-KW"/>
</dbReference>
<dbReference type="GO" id="GO:0044550">
    <property type="term" value="P:secondary metabolite biosynthetic process"/>
    <property type="evidence" value="ECO:0000314"/>
    <property type="project" value="PseudoCAP"/>
</dbReference>
<dbReference type="FunFam" id="3.50.50.60:FF:000349">
    <property type="entry name" value="2-heptyl-3-hydroxy-4(1H)-quinolone synthase"/>
    <property type="match status" value="1"/>
</dbReference>
<dbReference type="Gene3D" id="3.50.50.60">
    <property type="entry name" value="FAD/NAD(P)-binding domain"/>
    <property type="match status" value="1"/>
</dbReference>
<dbReference type="InterPro" id="IPR002938">
    <property type="entry name" value="FAD-bd"/>
</dbReference>
<dbReference type="InterPro" id="IPR036188">
    <property type="entry name" value="FAD/NAD-bd_sf"/>
</dbReference>
<dbReference type="InterPro" id="IPR044560">
    <property type="entry name" value="MOase"/>
</dbReference>
<dbReference type="PANTHER" id="PTHR45934">
    <property type="entry name" value="FAD/NAD(P)-BINDING OXIDOREDUCTASE FAMILY PROTEIN"/>
    <property type="match status" value="1"/>
</dbReference>
<dbReference type="PANTHER" id="PTHR45934:SF9">
    <property type="entry name" value="FAD_NAD(P)-BINDING OXIDOREDUCTASE FAMILY PROTEIN"/>
    <property type="match status" value="1"/>
</dbReference>
<dbReference type="Pfam" id="PF01494">
    <property type="entry name" value="FAD_binding_3"/>
    <property type="match status" value="1"/>
</dbReference>
<dbReference type="PRINTS" id="PR00420">
    <property type="entry name" value="RNGMNOXGNASE"/>
</dbReference>
<dbReference type="SUPFAM" id="SSF51905">
    <property type="entry name" value="FAD/NAD(P)-binding domain"/>
    <property type="match status" value="1"/>
</dbReference>
<evidence type="ECO:0000269" key="1">
    <source>
    </source>
</evidence>
<evidence type="ECO:0000305" key="2"/>
<keyword id="KW-0503">Monooxygenase</keyword>
<keyword id="KW-0520">NAD</keyword>
<keyword id="KW-0560">Oxidoreductase</keyword>
<keyword id="KW-0673">Quorum sensing</keyword>
<keyword id="KW-1185">Reference proteome</keyword>
<reference key="1">
    <citation type="journal article" date="2000" name="Nature">
        <title>Complete genome sequence of Pseudomonas aeruginosa PAO1, an opportunistic pathogen.</title>
        <authorList>
            <person name="Stover C.K."/>
            <person name="Pham X.-Q.T."/>
            <person name="Erwin A.L."/>
            <person name="Mizoguchi S.D."/>
            <person name="Warrener P."/>
            <person name="Hickey M.J."/>
            <person name="Brinkman F.S.L."/>
            <person name="Hufnagle W.O."/>
            <person name="Kowalik D.J."/>
            <person name="Lagrou M."/>
            <person name="Garber R.L."/>
            <person name="Goltry L."/>
            <person name="Tolentino E."/>
            <person name="Westbrock-Wadman S."/>
            <person name="Yuan Y."/>
            <person name="Brody L.L."/>
            <person name="Coulter S.N."/>
            <person name="Folger K.R."/>
            <person name="Kas A."/>
            <person name="Larbig K."/>
            <person name="Lim R.M."/>
            <person name="Smith K.A."/>
            <person name="Spencer D.H."/>
            <person name="Wong G.K.-S."/>
            <person name="Wu Z."/>
            <person name="Paulsen I.T."/>
            <person name="Reizer J."/>
            <person name="Saier M.H. Jr."/>
            <person name="Hancock R.E.W."/>
            <person name="Lory S."/>
            <person name="Olson M.V."/>
        </authorList>
    </citation>
    <scope>NUCLEOTIDE SEQUENCE [LARGE SCALE GENOMIC DNA]</scope>
    <source>
        <strain>ATCC 15692 / DSM 22644 / CIP 104116 / JCM 14847 / LMG 12228 / 1C / PRS 101 / PAO1</strain>
    </source>
</reference>
<reference key="2">
    <citation type="journal article" date="2002" name="J. Bacteriol.">
        <title>Functions required for extracellular quinolone signaling by Pseudomonas aeruginosa.</title>
        <authorList>
            <person name="Gallagher L.A."/>
            <person name="McKnight S.L."/>
            <person name="Kuznetsova M.S."/>
            <person name="Pesci E.C."/>
            <person name="Manoil C."/>
        </authorList>
    </citation>
    <scope>FUNCTION</scope>
    <scope>NOMENCLATURE</scope>
    <source>
        <strain>ATCC 15692 / DSM 22644 / CIP 104116 / JCM 14847 / LMG 12228 / 1C / PRS 101 / PAO1</strain>
    </source>
</reference>